<proteinExistence type="inferred from homology"/>
<protein>
    <recommendedName>
        <fullName>UPF0512 protein M</fullName>
    </recommendedName>
</protein>
<organism>
    <name type="scientific">Dictyostelium discoideum</name>
    <name type="common">Social amoeba</name>
    <dbReference type="NCBI Taxonomy" id="44689"/>
    <lineage>
        <taxon>Eukaryota</taxon>
        <taxon>Amoebozoa</taxon>
        <taxon>Evosea</taxon>
        <taxon>Eumycetozoa</taxon>
        <taxon>Dictyostelia</taxon>
        <taxon>Dictyosteliales</taxon>
        <taxon>Dictyosteliaceae</taxon>
        <taxon>Dictyostelium</taxon>
    </lineage>
</organism>
<keyword id="KW-1185">Reference proteome</keyword>
<accession>Q54BZ0</accession>
<gene>
    <name type="ORF">DDB_G0293326</name>
</gene>
<evidence type="ECO:0000305" key="1"/>
<feature type="chain" id="PRO_0000317351" description="UPF0512 protein M">
    <location>
        <begin position="1"/>
        <end position="91"/>
    </location>
</feature>
<dbReference type="EMBL" id="AAFI02000201">
    <property type="protein sequence ID" value="EAL60787.1"/>
    <property type="molecule type" value="Genomic_DNA"/>
</dbReference>
<dbReference type="RefSeq" id="XP_629201.1">
    <property type="nucleotide sequence ID" value="XM_629199.1"/>
</dbReference>
<dbReference type="FunCoup" id="Q54BZ0">
    <property type="interactions" value="877"/>
</dbReference>
<dbReference type="PaxDb" id="44689-DDB0191879"/>
<dbReference type="EnsemblProtists" id="EAL60787">
    <property type="protein sequence ID" value="EAL60787"/>
    <property type="gene ID" value="DDB_G0293326"/>
</dbReference>
<dbReference type="GeneID" id="8629160"/>
<dbReference type="KEGG" id="ddi:DDB_G0293326"/>
<dbReference type="dictyBase" id="DDB_G0293326"/>
<dbReference type="HOGENOM" id="CLU_194865_0_0_1"/>
<dbReference type="InParanoid" id="Q54BZ0"/>
<dbReference type="PhylomeDB" id="Q54BZ0"/>
<dbReference type="PRO" id="PR:Q54BZ0"/>
<dbReference type="Proteomes" id="UP000002195">
    <property type="component" value="Chromosome 6"/>
</dbReference>
<sequence>MGYPESISSISNSTGSMGSSISASNLNGFASNDNSISCFDGGCGGGLGGWGGLRGWGGIGGFNGGCEGCGSSNTNIINLDIDIGRSHRRCC</sequence>
<name>U512M_DICDI</name>
<reference key="1">
    <citation type="journal article" date="2005" name="Nature">
        <title>The genome of the social amoeba Dictyostelium discoideum.</title>
        <authorList>
            <person name="Eichinger L."/>
            <person name="Pachebat J.A."/>
            <person name="Gloeckner G."/>
            <person name="Rajandream M.A."/>
            <person name="Sucgang R."/>
            <person name="Berriman M."/>
            <person name="Song J."/>
            <person name="Olsen R."/>
            <person name="Szafranski K."/>
            <person name="Xu Q."/>
            <person name="Tunggal B."/>
            <person name="Kummerfeld S."/>
            <person name="Madera M."/>
            <person name="Konfortov B.A."/>
            <person name="Rivero F."/>
            <person name="Bankier A.T."/>
            <person name="Lehmann R."/>
            <person name="Hamlin N."/>
            <person name="Davies R."/>
            <person name="Gaudet P."/>
            <person name="Fey P."/>
            <person name="Pilcher K."/>
            <person name="Chen G."/>
            <person name="Saunders D."/>
            <person name="Sodergren E.J."/>
            <person name="Davis P."/>
            <person name="Kerhornou A."/>
            <person name="Nie X."/>
            <person name="Hall N."/>
            <person name="Anjard C."/>
            <person name="Hemphill L."/>
            <person name="Bason N."/>
            <person name="Farbrother P."/>
            <person name="Desany B."/>
            <person name="Just E."/>
            <person name="Morio T."/>
            <person name="Rost R."/>
            <person name="Churcher C.M."/>
            <person name="Cooper J."/>
            <person name="Haydock S."/>
            <person name="van Driessche N."/>
            <person name="Cronin A."/>
            <person name="Goodhead I."/>
            <person name="Muzny D.M."/>
            <person name="Mourier T."/>
            <person name="Pain A."/>
            <person name="Lu M."/>
            <person name="Harper D."/>
            <person name="Lindsay R."/>
            <person name="Hauser H."/>
            <person name="James K.D."/>
            <person name="Quiles M."/>
            <person name="Madan Babu M."/>
            <person name="Saito T."/>
            <person name="Buchrieser C."/>
            <person name="Wardroper A."/>
            <person name="Felder M."/>
            <person name="Thangavelu M."/>
            <person name="Johnson D."/>
            <person name="Knights A."/>
            <person name="Loulseged H."/>
            <person name="Mungall K.L."/>
            <person name="Oliver K."/>
            <person name="Price C."/>
            <person name="Quail M.A."/>
            <person name="Urushihara H."/>
            <person name="Hernandez J."/>
            <person name="Rabbinowitsch E."/>
            <person name="Steffen D."/>
            <person name="Sanders M."/>
            <person name="Ma J."/>
            <person name="Kohara Y."/>
            <person name="Sharp S."/>
            <person name="Simmonds M.N."/>
            <person name="Spiegler S."/>
            <person name="Tivey A."/>
            <person name="Sugano S."/>
            <person name="White B."/>
            <person name="Walker D."/>
            <person name="Woodward J.R."/>
            <person name="Winckler T."/>
            <person name="Tanaka Y."/>
            <person name="Shaulsky G."/>
            <person name="Schleicher M."/>
            <person name="Weinstock G.M."/>
            <person name="Rosenthal A."/>
            <person name="Cox E.C."/>
            <person name="Chisholm R.L."/>
            <person name="Gibbs R.A."/>
            <person name="Loomis W.F."/>
            <person name="Platzer M."/>
            <person name="Kay R.R."/>
            <person name="Williams J.G."/>
            <person name="Dear P.H."/>
            <person name="Noegel A.A."/>
            <person name="Barrell B.G."/>
            <person name="Kuspa A."/>
        </authorList>
    </citation>
    <scope>NUCLEOTIDE SEQUENCE [LARGE SCALE GENOMIC DNA]</scope>
    <source>
        <strain>AX4</strain>
    </source>
</reference>
<comment type="similarity">
    <text evidence="1">Belongs to the UPF0512 family.</text>
</comment>